<keyword id="KW-0028">Amino-acid biosynthesis</keyword>
<keyword id="KW-0032">Aminotransferase</keyword>
<keyword id="KW-0963">Cytoplasm</keyword>
<keyword id="KW-0663">Pyridoxal phosphate</keyword>
<keyword id="KW-1185">Reference proteome</keyword>
<keyword id="KW-0718">Serine biosynthesis</keyword>
<keyword id="KW-0808">Transferase</keyword>
<gene>
    <name evidence="1" type="primary">serC</name>
    <name type="ordered locus">LAF_0768</name>
</gene>
<dbReference type="EC" id="2.6.1.52" evidence="1"/>
<dbReference type="EMBL" id="AP008937">
    <property type="protein sequence ID" value="BAG27104.1"/>
    <property type="molecule type" value="Genomic_DNA"/>
</dbReference>
<dbReference type="RefSeq" id="WP_012391123.1">
    <property type="nucleotide sequence ID" value="NC_010610.1"/>
</dbReference>
<dbReference type="SMR" id="B2GBS2"/>
<dbReference type="KEGG" id="lfe:LAF_0768"/>
<dbReference type="eggNOG" id="COG1932">
    <property type="taxonomic scope" value="Bacteria"/>
</dbReference>
<dbReference type="HOGENOM" id="CLU_034866_0_2_9"/>
<dbReference type="UniPathway" id="UPA00135">
    <property type="reaction ID" value="UER00197"/>
</dbReference>
<dbReference type="Proteomes" id="UP000001697">
    <property type="component" value="Chromosome"/>
</dbReference>
<dbReference type="GO" id="GO:0005737">
    <property type="term" value="C:cytoplasm"/>
    <property type="evidence" value="ECO:0007669"/>
    <property type="project" value="UniProtKB-SubCell"/>
</dbReference>
<dbReference type="GO" id="GO:0004648">
    <property type="term" value="F:O-phospho-L-serine:2-oxoglutarate aminotransferase activity"/>
    <property type="evidence" value="ECO:0007669"/>
    <property type="project" value="UniProtKB-UniRule"/>
</dbReference>
<dbReference type="GO" id="GO:0030170">
    <property type="term" value="F:pyridoxal phosphate binding"/>
    <property type="evidence" value="ECO:0007669"/>
    <property type="project" value="UniProtKB-UniRule"/>
</dbReference>
<dbReference type="GO" id="GO:0006564">
    <property type="term" value="P:L-serine biosynthetic process"/>
    <property type="evidence" value="ECO:0007669"/>
    <property type="project" value="UniProtKB-UniRule"/>
</dbReference>
<dbReference type="FunFam" id="3.40.640.10:FF:000010">
    <property type="entry name" value="Phosphoserine aminotransferase"/>
    <property type="match status" value="1"/>
</dbReference>
<dbReference type="FunFam" id="3.90.1150.10:FF:000006">
    <property type="entry name" value="Phosphoserine aminotransferase"/>
    <property type="match status" value="1"/>
</dbReference>
<dbReference type="Gene3D" id="3.90.1150.10">
    <property type="entry name" value="Aspartate Aminotransferase, domain 1"/>
    <property type="match status" value="1"/>
</dbReference>
<dbReference type="Gene3D" id="3.40.640.10">
    <property type="entry name" value="Type I PLP-dependent aspartate aminotransferase-like (Major domain)"/>
    <property type="match status" value="1"/>
</dbReference>
<dbReference type="HAMAP" id="MF_00160">
    <property type="entry name" value="SerC_aminotrans_5"/>
    <property type="match status" value="1"/>
</dbReference>
<dbReference type="InterPro" id="IPR000192">
    <property type="entry name" value="Aminotrans_V_dom"/>
</dbReference>
<dbReference type="InterPro" id="IPR020578">
    <property type="entry name" value="Aminotrans_V_PyrdxlP_BS"/>
</dbReference>
<dbReference type="InterPro" id="IPR022278">
    <property type="entry name" value="Pser_aminoTfrase"/>
</dbReference>
<dbReference type="InterPro" id="IPR015424">
    <property type="entry name" value="PyrdxlP-dep_Trfase"/>
</dbReference>
<dbReference type="InterPro" id="IPR015421">
    <property type="entry name" value="PyrdxlP-dep_Trfase_major"/>
</dbReference>
<dbReference type="InterPro" id="IPR015422">
    <property type="entry name" value="PyrdxlP-dep_Trfase_small"/>
</dbReference>
<dbReference type="NCBIfam" id="NF003764">
    <property type="entry name" value="PRK05355.1"/>
    <property type="match status" value="1"/>
</dbReference>
<dbReference type="PANTHER" id="PTHR43247">
    <property type="entry name" value="PHOSPHOSERINE AMINOTRANSFERASE"/>
    <property type="match status" value="1"/>
</dbReference>
<dbReference type="PANTHER" id="PTHR43247:SF1">
    <property type="entry name" value="PHOSPHOSERINE AMINOTRANSFERASE"/>
    <property type="match status" value="1"/>
</dbReference>
<dbReference type="Pfam" id="PF00266">
    <property type="entry name" value="Aminotran_5"/>
    <property type="match status" value="1"/>
</dbReference>
<dbReference type="PIRSF" id="PIRSF000525">
    <property type="entry name" value="SerC"/>
    <property type="match status" value="1"/>
</dbReference>
<dbReference type="SUPFAM" id="SSF53383">
    <property type="entry name" value="PLP-dependent transferases"/>
    <property type="match status" value="1"/>
</dbReference>
<dbReference type="PROSITE" id="PS00595">
    <property type="entry name" value="AA_TRANSFER_CLASS_5"/>
    <property type="match status" value="1"/>
</dbReference>
<proteinExistence type="inferred from homology"/>
<reference key="1">
    <citation type="journal article" date="2008" name="DNA Res.">
        <title>Comparative genome analysis of Lactobacillus reuteri and Lactobacillus fermentum reveal a genomic island for reuterin and cobalamin production.</title>
        <authorList>
            <person name="Morita H."/>
            <person name="Toh H."/>
            <person name="Fukuda S."/>
            <person name="Horikawa H."/>
            <person name="Oshima K."/>
            <person name="Suzuki T."/>
            <person name="Murakami M."/>
            <person name="Hisamatsu S."/>
            <person name="Kato Y."/>
            <person name="Takizawa T."/>
            <person name="Fukuoka H."/>
            <person name="Yoshimura T."/>
            <person name="Itoh K."/>
            <person name="O'Sullivan D.J."/>
            <person name="McKay L.L."/>
            <person name="Ohno H."/>
            <person name="Kikuchi J."/>
            <person name="Masaoka T."/>
            <person name="Hattori M."/>
        </authorList>
    </citation>
    <scope>NUCLEOTIDE SEQUENCE [LARGE SCALE GENOMIC DNA]</scope>
    <source>
        <strain>NBRC 3956 / LMG 18251</strain>
    </source>
</reference>
<sequence>MPTYNFAAGPATLPRPVLEQVQRELLDYQGSQVSILEISHRSPVFREIYQQAKERLLQLMGLSADEYTPLFLQGGGTLQFTMVPLNLARDHHRVAYADTGHWSARAIEEAKKLPDLTVDVVTEAGPDFAHIPAVPDLPADTYDYLHITTNNTIMGLAYQDLPQTAVLLVGDLSSNFLGQAYDFSSFDLIYAGAQKNLAPAGVTIVVVKNDYLTEDHGLPSMLNYPALAKKESALNTPPVFQIYFANLVLKWLKEQGGVQAMDELNRQKAGLVYDYLDQSKLFSNRVAPDSRSLTNIPFTTGKADLDQRFIKEAAAAGLVNLKGHRLVGGMRASLYNAMPLAGAVALRDFMHQFEQEI</sequence>
<protein>
    <recommendedName>
        <fullName evidence="1">Phosphoserine aminotransferase</fullName>
        <ecNumber evidence="1">2.6.1.52</ecNumber>
    </recommendedName>
    <alternativeName>
        <fullName evidence="1">Phosphohydroxythreonine aminotransferase</fullName>
        <shortName evidence="1">PSAT</shortName>
    </alternativeName>
</protein>
<comment type="function">
    <text evidence="1">Catalyzes the reversible conversion of 3-phosphohydroxypyruvate to phosphoserine and of 3-hydroxy-2-oxo-4-phosphonooxybutanoate to phosphohydroxythreonine.</text>
</comment>
<comment type="catalytic activity">
    <reaction evidence="1">
        <text>O-phospho-L-serine + 2-oxoglutarate = 3-phosphooxypyruvate + L-glutamate</text>
        <dbReference type="Rhea" id="RHEA:14329"/>
        <dbReference type="ChEBI" id="CHEBI:16810"/>
        <dbReference type="ChEBI" id="CHEBI:18110"/>
        <dbReference type="ChEBI" id="CHEBI:29985"/>
        <dbReference type="ChEBI" id="CHEBI:57524"/>
        <dbReference type="EC" id="2.6.1.52"/>
    </reaction>
</comment>
<comment type="catalytic activity">
    <reaction evidence="1">
        <text>4-(phosphooxy)-L-threonine + 2-oxoglutarate = (R)-3-hydroxy-2-oxo-4-phosphooxybutanoate + L-glutamate</text>
        <dbReference type="Rhea" id="RHEA:16573"/>
        <dbReference type="ChEBI" id="CHEBI:16810"/>
        <dbReference type="ChEBI" id="CHEBI:29985"/>
        <dbReference type="ChEBI" id="CHEBI:58452"/>
        <dbReference type="ChEBI" id="CHEBI:58538"/>
        <dbReference type="EC" id="2.6.1.52"/>
    </reaction>
</comment>
<comment type="cofactor">
    <cofactor evidence="1">
        <name>pyridoxal 5'-phosphate</name>
        <dbReference type="ChEBI" id="CHEBI:597326"/>
    </cofactor>
    <text evidence="1">Binds 1 pyridoxal phosphate per subunit.</text>
</comment>
<comment type="pathway">
    <text evidence="1">Amino-acid biosynthesis; L-serine biosynthesis; L-serine from 3-phospho-D-glycerate: step 2/3.</text>
</comment>
<comment type="subunit">
    <text evidence="1">Homodimer.</text>
</comment>
<comment type="subcellular location">
    <subcellularLocation>
        <location evidence="1">Cytoplasm</location>
    </subcellularLocation>
</comment>
<comment type="similarity">
    <text evidence="1">Belongs to the class-V pyridoxal-phosphate-dependent aminotransferase family. SerC subfamily.</text>
</comment>
<feature type="chain" id="PRO_1000097215" description="Phosphoserine aminotransferase">
    <location>
        <begin position="1"/>
        <end position="357"/>
    </location>
</feature>
<feature type="binding site" evidence="1">
    <location>
        <position position="41"/>
    </location>
    <ligand>
        <name>L-glutamate</name>
        <dbReference type="ChEBI" id="CHEBI:29985"/>
    </ligand>
</feature>
<feature type="binding site" evidence="1">
    <location>
        <begin position="76"/>
        <end position="77"/>
    </location>
    <ligand>
        <name>pyridoxal 5'-phosphate</name>
        <dbReference type="ChEBI" id="CHEBI:597326"/>
    </ligand>
</feature>
<feature type="binding site" evidence="1">
    <location>
        <position position="102"/>
    </location>
    <ligand>
        <name>pyridoxal 5'-phosphate</name>
        <dbReference type="ChEBI" id="CHEBI:597326"/>
    </ligand>
</feature>
<feature type="binding site" evidence="1">
    <location>
        <position position="152"/>
    </location>
    <ligand>
        <name>pyridoxal 5'-phosphate</name>
        <dbReference type="ChEBI" id="CHEBI:597326"/>
    </ligand>
</feature>
<feature type="binding site" evidence="1">
    <location>
        <position position="171"/>
    </location>
    <ligand>
        <name>pyridoxal 5'-phosphate</name>
        <dbReference type="ChEBI" id="CHEBI:597326"/>
    </ligand>
</feature>
<feature type="binding site" evidence="1">
    <location>
        <position position="194"/>
    </location>
    <ligand>
        <name>pyridoxal 5'-phosphate</name>
        <dbReference type="ChEBI" id="CHEBI:597326"/>
    </ligand>
</feature>
<feature type="binding site" evidence="1">
    <location>
        <begin position="235"/>
        <end position="236"/>
    </location>
    <ligand>
        <name>pyridoxal 5'-phosphate</name>
        <dbReference type="ChEBI" id="CHEBI:597326"/>
    </ligand>
</feature>
<feature type="modified residue" description="N6-(pyridoxal phosphate)lysine" evidence="1">
    <location>
        <position position="195"/>
    </location>
</feature>
<name>SERC_LIMF3</name>
<accession>B2GBS2</accession>
<evidence type="ECO:0000255" key="1">
    <source>
        <dbReference type="HAMAP-Rule" id="MF_00160"/>
    </source>
</evidence>
<organism>
    <name type="scientific">Limosilactobacillus fermentum (strain NBRC 3956 / LMG 18251)</name>
    <name type="common">Lactobacillus fermentum</name>
    <dbReference type="NCBI Taxonomy" id="334390"/>
    <lineage>
        <taxon>Bacteria</taxon>
        <taxon>Bacillati</taxon>
        <taxon>Bacillota</taxon>
        <taxon>Bacilli</taxon>
        <taxon>Lactobacillales</taxon>
        <taxon>Lactobacillaceae</taxon>
        <taxon>Limosilactobacillus</taxon>
    </lineage>
</organism>